<feature type="chain" id="PRO_1000080779" description="Transcriptional repressor NrdR">
    <location>
        <begin position="1"/>
        <end position="154"/>
    </location>
</feature>
<feature type="domain" description="ATP-cone" evidence="1">
    <location>
        <begin position="46"/>
        <end position="136"/>
    </location>
</feature>
<feature type="zinc finger region" evidence="1">
    <location>
        <begin position="3"/>
        <end position="34"/>
    </location>
</feature>
<sequence length="154" mass="17238">MHCPFCRHPDSRVVDSRETDEGQAIRRRRSCPECGRRFTTVETAVLAVVKRSGVTEPFSREKVIKGVRRACQGRQVDDDALNLLAQQVEDAVRATGSPEVPSHEVGLAILGPLRDLDEVAYLRFASVYRSFESAADFEREIEALRAHQDVTRSG</sequence>
<comment type="function">
    <text evidence="1">Negatively regulates transcription of bacterial ribonucleotide reductase nrd genes and operons by binding to NrdR-boxes.</text>
</comment>
<comment type="cofactor">
    <cofactor evidence="1">
        <name>Zn(2+)</name>
        <dbReference type="ChEBI" id="CHEBI:29105"/>
    </cofactor>
    <text evidence="1">Binds 1 zinc ion.</text>
</comment>
<comment type="similarity">
    <text evidence="1">Belongs to the NrdR family.</text>
</comment>
<proteinExistence type="inferred from homology"/>
<protein>
    <recommendedName>
        <fullName evidence="1">Transcriptional repressor NrdR</fullName>
    </recommendedName>
</protein>
<reference key="1">
    <citation type="submission" date="2007-02" db="EMBL/GenBank/DDBJ databases">
        <title>Complete sequence of Mycobacterium sp. JLS.</title>
        <authorList>
            <consortium name="US DOE Joint Genome Institute"/>
            <person name="Copeland A."/>
            <person name="Lucas S."/>
            <person name="Lapidus A."/>
            <person name="Barry K."/>
            <person name="Detter J.C."/>
            <person name="Glavina del Rio T."/>
            <person name="Hammon N."/>
            <person name="Israni S."/>
            <person name="Dalin E."/>
            <person name="Tice H."/>
            <person name="Pitluck S."/>
            <person name="Chain P."/>
            <person name="Malfatti S."/>
            <person name="Shin M."/>
            <person name="Vergez L."/>
            <person name="Schmutz J."/>
            <person name="Larimer F."/>
            <person name="Land M."/>
            <person name="Hauser L."/>
            <person name="Kyrpides N."/>
            <person name="Mikhailova N."/>
            <person name="Miller C.D."/>
            <person name="Anderson A.J."/>
            <person name="Sims R.C."/>
            <person name="Richardson P."/>
        </authorList>
    </citation>
    <scope>NUCLEOTIDE SEQUENCE [LARGE SCALE GENOMIC DNA]</scope>
    <source>
        <strain>JLS</strain>
    </source>
</reference>
<organism>
    <name type="scientific">Mycobacterium sp. (strain JLS)</name>
    <dbReference type="NCBI Taxonomy" id="164757"/>
    <lineage>
        <taxon>Bacteria</taxon>
        <taxon>Bacillati</taxon>
        <taxon>Actinomycetota</taxon>
        <taxon>Actinomycetes</taxon>
        <taxon>Mycobacteriales</taxon>
        <taxon>Mycobacteriaceae</taxon>
        <taxon>Mycobacterium</taxon>
    </lineage>
</organism>
<gene>
    <name evidence="1" type="primary">nrdR</name>
    <name type="ordered locus">Mjls_2159</name>
</gene>
<dbReference type="EMBL" id="CP000580">
    <property type="protein sequence ID" value="ABN97945.1"/>
    <property type="molecule type" value="Genomic_DNA"/>
</dbReference>
<dbReference type="SMR" id="A3PYG8"/>
<dbReference type="KEGG" id="mjl:Mjls_2159"/>
<dbReference type="HOGENOM" id="CLU_108412_1_0_11"/>
<dbReference type="BioCyc" id="MSP164757:G1G8C-2179-MONOMER"/>
<dbReference type="GO" id="GO:0005524">
    <property type="term" value="F:ATP binding"/>
    <property type="evidence" value="ECO:0007669"/>
    <property type="project" value="UniProtKB-KW"/>
</dbReference>
<dbReference type="GO" id="GO:0003677">
    <property type="term" value="F:DNA binding"/>
    <property type="evidence" value="ECO:0007669"/>
    <property type="project" value="UniProtKB-KW"/>
</dbReference>
<dbReference type="GO" id="GO:0008270">
    <property type="term" value="F:zinc ion binding"/>
    <property type="evidence" value="ECO:0007669"/>
    <property type="project" value="UniProtKB-UniRule"/>
</dbReference>
<dbReference type="GO" id="GO:0045892">
    <property type="term" value="P:negative regulation of DNA-templated transcription"/>
    <property type="evidence" value="ECO:0007669"/>
    <property type="project" value="UniProtKB-UniRule"/>
</dbReference>
<dbReference type="HAMAP" id="MF_00440">
    <property type="entry name" value="NrdR"/>
    <property type="match status" value="1"/>
</dbReference>
<dbReference type="InterPro" id="IPR005144">
    <property type="entry name" value="ATP-cone_dom"/>
</dbReference>
<dbReference type="InterPro" id="IPR055173">
    <property type="entry name" value="NrdR-like_N"/>
</dbReference>
<dbReference type="InterPro" id="IPR003796">
    <property type="entry name" value="RNR_NrdR-like"/>
</dbReference>
<dbReference type="NCBIfam" id="TIGR00244">
    <property type="entry name" value="transcriptional regulator NrdR"/>
    <property type="match status" value="1"/>
</dbReference>
<dbReference type="PANTHER" id="PTHR30455">
    <property type="entry name" value="TRANSCRIPTIONAL REPRESSOR NRDR"/>
    <property type="match status" value="1"/>
</dbReference>
<dbReference type="PANTHER" id="PTHR30455:SF2">
    <property type="entry name" value="TRANSCRIPTIONAL REPRESSOR NRDR"/>
    <property type="match status" value="1"/>
</dbReference>
<dbReference type="Pfam" id="PF03477">
    <property type="entry name" value="ATP-cone"/>
    <property type="match status" value="1"/>
</dbReference>
<dbReference type="Pfam" id="PF22811">
    <property type="entry name" value="Zn_ribbon_NrdR"/>
    <property type="match status" value="1"/>
</dbReference>
<dbReference type="PROSITE" id="PS51161">
    <property type="entry name" value="ATP_CONE"/>
    <property type="match status" value="1"/>
</dbReference>
<name>NRDR_MYCSJ</name>
<keyword id="KW-0067">ATP-binding</keyword>
<keyword id="KW-0238">DNA-binding</keyword>
<keyword id="KW-0479">Metal-binding</keyword>
<keyword id="KW-0547">Nucleotide-binding</keyword>
<keyword id="KW-0678">Repressor</keyword>
<keyword id="KW-0804">Transcription</keyword>
<keyword id="KW-0805">Transcription regulation</keyword>
<keyword id="KW-0862">Zinc</keyword>
<keyword id="KW-0863">Zinc-finger</keyword>
<evidence type="ECO:0000255" key="1">
    <source>
        <dbReference type="HAMAP-Rule" id="MF_00440"/>
    </source>
</evidence>
<accession>A3PYG8</accession>